<proteinExistence type="inferred from homology"/>
<accession>A3M4Q9</accession>
<reference key="1">
    <citation type="journal article" date="2007" name="Genes Dev.">
        <title>New insights into Acinetobacter baumannii pathogenesis revealed by high-density pyrosequencing and transposon mutagenesis.</title>
        <authorList>
            <person name="Smith M.G."/>
            <person name="Gianoulis T.A."/>
            <person name="Pukatzki S."/>
            <person name="Mekalanos J.J."/>
            <person name="Ornston L.N."/>
            <person name="Gerstein M."/>
            <person name="Snyder M."/>
        </authorList>
    </citation>
    <scope>NUCLEOTIDE SEQUENCE [LARGE SCALE GENOMIC DNA]</scope>
    <source>
        <strain>ATCC 17978 / DSM 105126 / CIP 53.77 / LMG 1025 / NCDC KC755 / 5377</strain>
    </source>
</reference>
<sequence length="402" mass="43710">MSVTLGTPLQSSAFKVLLLGSGELGKEVVISLQRLGVEVHAADRYDHAPAMQVAHFSYVLNMADPAQLKQLIEKVKPNLIVPEIEAIATEVLLEIEANKTATVIPSAKAVNLTMNREGIRRLAAEELGLPTSAYRFADTLESFRAACDDIGYPNFVKPVMSSSGKGQSRVKSFDEVDAAWEYAMQGGRVNQGTVIIESQIDFDFEITLLTVRAKNPETGEIETHYCDPIGHRQDAGDYVESWQPQPMTPAALEEAKRIANKVTTALGGCGIFGVELFIKGDKVWFSEVSPRPHDTGLVTLASQFQSEFELHARAILGLPVNTARHSVAASAVIYAGVDANNLSYSNLNVALAHPDTDLRLFGKPEGFKRRRMGVATARAENTDLARTLAKETADQVSVQTNS</sequence>
<organism>
    <name type="scientific">Acinetobacter baumannii (strain ATCC 17978 / DSM 105126 / CIP 53.77 / LMG 1025 / NCDC KC755 / 5377)</name>
    <dbReference type="NCBI Taxonomy" id="400667"/>
    <lineage>
        <taxon>Bacteria</taxon>
        <taxon>Pseudomonadati</taxon>
        <taxon>Pseudomonadota</taxon>
        <taxon>Gammaproteobacteria</taxon>
        <taxon>Moraxellales</taxon>
        <taxon>Moraxellaceae</taxon>
        <taxon>Acinetobacter</taxon>
        <taxon>Acinetobacter calcoaceticus/baumannii complex</taxon>
    </lineage>
</organism>
<evidence type="ECO:0000255" key="1">
    <source>
        <dbReference type="HAMAP-Rule" id="MF_01643"/>
    </source>
</evidence>
<keyword id="KW-0067">ATP-binding</keyword>
<keyword id="KW-0436">Ligase</keyword>
<keyword id="KW-0460">Magnesium</keyword>
<keyword id="KW-0479">Metal-binding</keyword>
<keyword id="KW-0547">Nucleotide-binding</keyword>
<keyword id="KW-0658">Purine biosynthesis</keyword>
<protein>
    <recommendedName>
        <fullName evidence="1">Formate-dependent phosphoribosylglycinamide formyltransferase</fullName>
        <ecNumber evidence="1">6.3.1.21</ecNumber>
    </recommendedName>
    <alternativeName>
        <fullName evidence="1">5'-phosphoribosylglycinamide transformylase 2</fullName>
    </alternativeName>
    <alternativeName>
        <fullName evidence="1">Formate-dependent GAR transformylase</fullName>
    </alternativeName>
    <alternativeName>
        <fullName evidence="1">GAR transformylase 2</fullName>
        <shortName evidence="1">GART 2</shortName>
    </alternativeName>
    <alternativeName>
        <fullName evidence="1">Non-folate glycinamide ribonucleotide transformylase</fullName>
    </alternativeName>
    <alternativeName>
        <fullName evidence="1">Phosphoribosylglycinamide formyltransferase 2</fullName>
    </alternativeName>
</protein>
<dbReference type="EC" id="6.3.1.21" evidence="1"/>
<dbReference type="EMBL" id="CP000521">
    <property type="protein sequence ID" value="ABO11903.2"/>
    <property type="molecule type" value="Genomic_DNA"/>
</dbReference>
<dbReference type="SMR" id="A3M4Q9"/>
<dbReference type="KEGG" id="acb:A1S_1475"/>
<dbReference type="HOGENOM" id="CLU_011534_1_3_6"/>
<dbReference type="UniPathway" id="UPA00074">
    <property type="reaction ID" value="UER00127"/>
</dbReference>
<dbReference type="GO" id="GO:0005829">
    <property type="term" value="C:cytosol"/>
    <property type="evidence" value="ECO:0007669"/>
    <property type="project" value="TreeGrafter"/>
</dbReference>
<dbReference type="GO" id="GO:0005524">
    <property type="term" value="F:ATP binding"/>
    <property type="evidence" value="ECO:0007669"/>
    <property type="project" value="UniProtKB-UniRule"/>
</dbReference>
<dbReference type="GO" id="GO:0000287">
    <property type="term" value="F:magnesium ion binding"/>
    <property type="evidence" value="ECO:0007669"/>
    <property type="project" value="InterPro"/>
</dbReference>
<dbReference type="GO" id="GO:0043815">
    <property type="term" value="F:phosphoribosylglycinamide formyltransferase 2 activity"/>
    <property type="evidence" value="ECO:0007669"/>
    <property type="project" value="UniProtKB-UniRule"/>
</dbReference>
<dbReference type="GO" id="GO:0004644">
    <property type="term" value="F:phosphoribosylglycinamide formyltransferase activity"/>
    <property type="evidence" value="ECO:0007669"/>
    <property type="project" value="InterPro"/>
</dbReference>
<dbReference type="GO" id="GO:0006189">
    <property type="term" value="P:'de novo' IMP biosynthetic process"/>
    <property type="evidence" value="ECO:0007669"/>
    <property type="project" value="UniProtKB-UniRule"/>
</dbReference>
<dbReference type="FunFam" id="3.30.1490.20:FF:000013">
    <property type="entry name" value="Formate-dependent phosphoribosylglycinamide formyltransferase"/>
    <property type="match status" value="1"/>
</dbReference>
<dbReference type="Gene3D" id="3.40.50.20">
    <property type="match status" value="1"/>
</dbReference>
<dbReference type="Gene3D" id="3.30.1490.20">
    <property type="entry name" value="ATP-grasp fold, A domain"/>
    <property type="match status" value="1"/>
</dbReference>
<dbReference type="Gene3D" id="3.30.470.20">
    <property type="entry name" value="ATP-grasp fold, B domain"/>
    <property type="match status" value="1"/>
</dbReference>
<dbReference type="HAMAP" id="MF_01643">
    <property type="entry name" value="PurT"/>
    <property type="match status" value="1"/>
</dbReference>
<dbReference type="InterPro" id="IPR011761">
    <property type="entry name" value="ATP-grasp"/>
</dbReference>
<dbReference type="InterPro" id="IPR003135">
    <property type="entry name" value="ATP-grasp_carboxylate-amine"/>
</dbReference>
<dbReference type="InterPro" id="IPR013815">
    <property type="entry name" value="ATP_grasp_subdomain_1"/>
</dbReference>
<dbReference type="InterPro" id="IPR016185">
    <property type="entry name" value="PreATP-grasp_dom_sf"/>
</dbReference>
<dbReference type="InterPro" id="IPR005862">
    <property type="entry name" value="PurT"/>
</dbReference>
<dbReference type="InterPro" id="IPR054350">
    <property type="entry name" value="PurT/PurK_preATP-grasp"/>
</dbReference>
<dbReference type="InterPro" id="IPR048740">
    <property type="entry name" value="PurT_C"/>
</dbReference>
<dbReference type="InterPro" id="IPR011054">
    <property type="entry name" value="Rudment_hybrid_motif"/>
</dbReference>
<dbReference type="NCBIfam" id="NF006766">
    <property type="entry name" value="PRK09288.1"/>
    <property type="match status" value="1"/>
</dbReference>
<dbReference type="NCBIfam" id="TIGR01142">
    <property type="entry name" value="purT"/>
    <property type="match status" value="1"/>
</dbReference>
<dbReference type="PANTHER" id="PTHR43055">
    <property type="entry name" value="FORMATE-DEPENDENT PHOSPHORIBOSYLGLYCINAMIDE FORMYLTRANSFERASE"/>
    <property type="match status" value="1"/>
</dbReference>
<dbReference type="PANTHER" id="PTHR43055:SF1">
    <property type="entry name" value="FORMATE-DEPENDENT PHOSPHORIBOSYLGLYCINAMIDE FORMYLTRANSFERASE"/>
    <property type="match status" value="1"/>
</dbReference>
<dbReference type="Pfam" id="PF02222">
    <property type="entry name" value="ATP-grasp"/>
    <property type="match status" value="1"/>
</dbReference>
<dbReference type="Pfam" id="PF21244">
    <property type="entry name" value="PurT_C"/>
    <property type="match status" value="1"/>
</dbReference>
<dbReference type="Pfam" id="PF22660">
    <property type="entry name" value="RS_preATP-grasp-like"/>
    <property type="match status" value="1"/>
</dbReference>
<dbReference type="SUPFAM" id="SSF56059">
    <property type="entry name" value="Glutathione synthetase ATP-binding domain-like"/>
    <property type="match status" value="1"/>
</dbReference>
<dbReference type="SUPFAM" id="SSF52440">
    <property type="entry name" value="PreATP-grasp domain"/>
    <property type="match status" value="1"/>
</dbReference>
<dbReference type="SUPFAM" id="SSF51246">
    <property type="entry name" value="Rudiment single hybrid motif"/>
    <property type="match status" value="1"/>
</dbReference>
<dbReference type="PROSITE" id="PS50975">
    <property type="entry name" value="ATP_GRASP"/>
    <property type="match status" value="1"/>
</dbReference>
<comment type="function">
    <text evidence="1">Involved in the de novo purine biosynthesis. Catalyzes the transfer of formate to 5-phospho-ribosyl-glycinamide (GAR), producing 5-phospho-ribosyl-N-formylglycinamide (FGAR). Formate is provided by PurU via hydrolysis of 10-formyl-tetrahydrofolate.</text>
</comment>
<comment type="catalytic activity">
    <reaction evidence="1">
        <text>N(1)-(5-phospho-beta-D-ribosyl)glycinamide + formate + ATP = N(2)-formyl-N(1)-(5-phospho-beta-D-ribosyl)glycinamide + ADP + phosphate + H(+)</text>
        <dbReference type="Rhea" id="RHEA:24829"/>
        <dbReference type="ChEBI" id="CHEBI:15378"/>
        <dbReference type="ChEBI" id="CHEBI:15740"/>
        <dbReference type="ChEBI" id="CHEBI:30616"/>
        <dbReference type="ChEBI" id="CHEBI:43474"/>
        <dbReference type="ChEBI" id="CHEBI:143788"/>
        <dbReference type="ChEBI" id="CHEBI:147286"/>
        <dbReference type="ChEBI" id="CHEBI:456216"/>
        <dbReference type="EC" id="6.3.1.21"/>
    </reaction>
    <physiologicalReaction direction="left-to-right" evidence="1">
        <dbReference type="Rhea" id="RHEA:24830"/>
    </physiologicalReaction>
</comment>
<comment type="pathway">
    <text evidence="1">Purine metabolism; IMP biosynthesis via de novo pathway; N(2)-formyl-N(1)-(5-phospho-D-ribosyl)glycinamide from N(1)-(5-phospho-D-ribosyl)glycinamide (formate route): step 1/1.</text>
</comment>
<comment type="subunit">
    <text evidence="1">Homodimer.</text>
</comment>
<comment type="similarity">
    <text evidence="1">Belongs to the PurK/PurT family.</text>
</comment>
<feature type="chain" id="PRO_0000319113" description="Formate-dependent phosphoribosylglycinamide formyltransferase">
    <location>
        <begin position="1"/>
        <end position="402"/>
    </location>
</feature>
<feature type="domain" description="ATP-grasp" evidence="1">
    <location>
        <begin position="121"/>
        <end position="316"/>
    </location>
</feature>
<feature type="binding site" evidence="1">
    <location>
        <begin position="23"/>
        <end position="24"/>
    </location>
    <ligand>
        <name>N(1)-(5-phospho-beta-D-ribosyl)glycinamide</name>
        <dbReference type="ChEBI" id="CHEBI:143788"/>
    </ligand>
</feature>
<feature type="binding site" evidence="1">
    <location>
        <position position="83"/>
    </location>
    <ligand>
        <name>N(1)-(5-phospho-beta-D-ribosyl)glycinamide</name>
        <dbReference type="ChEBI" id="CHEBI:143788"/>
    </ligand>
</feature>
<feature type="binding site" evidence="1">
    <location>
        <position position="116"/>
    </location>
    <ligand>
        <name>ATP</name>
        <dbReference type="ChEBI" id="CHEBI:30616"/>
    </ligand>
</feature>
<feature type="binding site" evidence="1">
    <location>
        <position position="157"/>
    </location>
    <ligand>
        <name>ATP</name>
        <dbReference type="ChEBI" id="CHEBI:30616"/>
    </ligand>
</feature>
<feature type="binding site" evidence="1">
    <location>
        <begin position="162"/>
        <end position="167"/>
    </location>
    <ligand>
        <name>ATP</name>
        <dbReference type="ChEBI" id="CHEBI:30616"/>
    </ligand>
</feature>
<feature type="binding site" evidence="1">
    <location>
        <begin position="197"/>
        <end position="200"/>
    </location>
    <ligand>
        <name>ATP</name>
        <dbReference type="ChEBI" id="CHEBI:30616"/>
    </ligand>
</feature>
<feature type="binding site" evidence="1">
    <location>
        <position position="205"/>
    </location>
    <ligand>
        <name>ATP</name>
        <dbReference type="ChEBI" id="CHEBI:30616"/>
    </ligand>
</feature>
<feature type="binding site" evidence="1">
    <location>
        <position position="275"/>
    </location>
    <ligand>
        <name>Mg(2+)</name>
        <dbReference type="ChEBI" id="CHEBI:18420"/>
    </ligand>
</feature>
<feature type="binding site" evidence="1">
    <location>
        <position position="287"/>
    </location>
    <ligand>
        <name>Mg(2+)</name>
        <dbReference type="ChEBI" id="CHEBI:18420"/>
    </ligand>
</feature>
<feature type="binding site" evidence="1">
    <location>
        <position position="294"/>
    </location>
    <ligand>
        <name>N(1)-(5-phospho-beta-D-ribosyl)glycinamide</name>
        <dbReference type="ChEBI" id="CHEBI:143788"/>
    </ligand>
</feature>
<feature type="binding site" evidence="1">
    <location>
        <position position="363"/>
    </location>
    <ligand>
        <name>N(1)-(5-phospho-beta-D-ribosyl)glycinamide</name>
        <dbReference type="ChEBI" id="CHEBI:143788"/>
    </ligand>
</feature>
<feature type="binding site" evidence="1">
    <location>
        <begin position="370"/>
        <end position="371"/>
    </location>
    <ligand>
        <name>N(1)-(5-phospho-beta-D-ribosyl)glycinamide</name>
        <dbReference type="ChEBI" id="CHEBI:143788"/>
    </ligand>
</feature>
<gene>
    <name evidence="1" type="primary">purT</name>
    <name type="ordered locus">A1S_1475</name>
</gene>
<name>PURT_ACIBT</name>